<keyword id="KW-0378">Hydrolase</keyword>
<keyword id="KW-0460">Magnesium</keyword>
<keyword id="KW-0479">Metal-binding</keyword>
<keyword id="KW-0546">Nucleotide metabolism</keyword>
<keyword id="KW-0547">Nucleotide-binding</keyword>
<keyword id="KW-1185">Reference proteome</keyword>
<feature type="chain" id="PRO_0000178155" description="dITP/XTP pyrophosphatase">
    <location>
        <begin position="1"/>
        <end position="204"/>
    </location>
</feature>
<feature type="active site" description="Proton acceptor" evidence="1">
    <location>
        <position position="76"/>
    </location>
</feature>
<feature type="binding site" evidence="1">
    <location>
        <begin position="8"/>
        <end position="13"/>
    </location>
    <ligand>
        <name>substrate</name>
    </ligand>
</feature>
<feature type="binding site" evidence="1">
    <location>
        <position position="41"/>
    </location>
    <ligand>
        <name>Mg(2+)</name>
        <dbReference type="ChEBI" id="CHEBI:18420"/>
    </ligand>
</feature>
<feature type="binding site" evidence="1">
    <location>
        <position position="76"/>
    </location>
    <ligand>
        <name>Mg(2+)</name>
        <dbReference type="ChEBI" id="CHEBI:18420"/>
    </ligand>
</feature>
<feature type="binding site" evidence="1">
    <location>
        <position position="77"/>
    </location>
    <ligand>
        <name>substrate</name>
    </ligand>
</feature>
<feature type="binding site" evidence="1">
    <location>
        <begin position="159"/>
        <end position="162"/>
    </location>
    <ligand>
        <name>substrate</name>
    </ligand>
</feature>
<feature type="binding site" evidence="1">
    <location>
        <position position="182"/>
    </location>
    <ligand>
        <name>substrate</name>
    </ligand>
</feature>
<feature type="binding site" evidence="1">
    <location>
        <begin position="187"/>
        <end position="188"/>
    </location>
    <ligand>
        <name>substrate</name>
    </ligand>
</feature>
<protein>
    <recommendedName>
        <fullName evidence="1">dITP/XTP pyrophosphatase</fullName>
        <ecNumber evidence="1">3.6.1.66</ecNumber>
    </recommendedName>
    <alternativeName>
        <fullName evidence="1">Non-canonical purine NTP pyrophosphatase</fullName>
    </alternativeName>
    <alternativeName>
        <fullName evidence="1">Non-standard purine NTP pyrophosphatase</fullName>
    </alternativeName>
    <alternativeName>
        <fullName evidence="1">Nucleoside-triphosphate diphosphatase</fullName>
    </alternativeName>
    <alternativeName>
        <fullName evidence="1">Nucleoside-triphosphate pyrophosphatase</fullName>
        <shortName evidence="1">NTPase</shortName>
    </alternativeName>
</protein>
<evidence type="ECO:0000255" key="1">
    <source>
        <dbReference type="HAMAP-Rule" id="MF_01405"/>
    </source>
</evidence>
<reference key="1">
    <citation type="journal article" date="2002" name="Proc. Natl. Acad. Sci. U.S.A.">
        <title>Complete genome sequence of Clostridium perfringens, an anaerobic flesh-eater.</title>
        <authorList>
            <person name="Shimizu T."/>
            <person name="Ohtani K."/>
            <person name="Hirakawa H."/>
            <person name="Ohshima K."/>
            <person name="Yamashita A."/>
            <person name="Shiba T."/>
            <person name="Ogasawara N."/>
            <person name="Hattori M."/>
            <person name="Kuhara S."/>
            <person name="Hayashi H."/>
        </authorList>
    </citation>
    <scope>NUCLEOTIDE SEQUENCE [LARGE SCALE GENOMIC DNA]</scope>
    <source>
        <strain>13 / Type A</strain>
    </source>
</reference>
<organism>
    <name type="scientific">Clostridium perfringens (strain 13 / Type A)</name>
    <dbReference type="NCBI Taxonomy" id="195102"/>
    <lineage>
        <taxon>Bacteria</taxon>
        <taxon>Bacillati</taxon>
        <taxon>Bacillota</taxon>
        <taxon>Clostridia</taxon>
        <taxon>Eubacteriales</taxon>
        <taxon>Clostridiaceae</taxon>
        <taxon>Clostridium</taxon>
    </lineage>
</organism>
<accession>Q8XI68</accession>
<gene>
    <name type="ordered locus">CPE2253</name>
</gene>
<name>IXTPA_CLOPE</name>
<sequence>MKKFILASNNAHKVKEIKEILKDFNLNILSLNEAGIDIDVEEDGKTFEENSFKKANEIRKYLLSKGESDFIVMADDSGLEVDYLNGAPGIYSARYAGEHGNDSKNNEKLLEELKNVKDDERKANFICVIVAVTDKGEKIVAEGKSYGLILEALSGNEGFGYDPLFFVPEYKKTFAEMTSDEKNAISHRGRALEKLKDNLKGILK</sequence>
<comment type="function">
    <text evidence="1">Pyrophosphatase that catalyzes the hydrolysis of nucleoside triphosphates to their monophosphate derivatives, with a high preference for the non-canonical purine nucleotides XTP (xanthosine triphosphate), dITP (deoxyinosine triphosphate) and ITP. Seems to function as a house-cleaning enzyme that removes non-canonical purine nucleotides from the nucleotide pool, thus preventing their incorporation into DNA/RNA and avoiding chromosomal lesions.</text>
</comment>
<comment type="catalytic activity">
    <reaction evidence="1">
        <text>XTP + H2O = XMP + diphosphate + H(+)</text>
        <dbReference type="Rhea" id="RHEA:28610"/>
        <dbReference type="ChEBI" id="CHEBI:15377"/>
        <dbReference type="ChEBI" id="CHEBI:15378"/>
        <dbReference type="ChEBI" id="CHEBI:33019"/>
        <dbReference type="ChEBI" id="CHEBI:57464"/>
        <dbReference type="ChEBI" id="CHEBI:61314"/>
        <dbReference type="EC" id="3.6.1.66"/>
    </reaction>
</comment>
<comment type="catalytic activity">
    <reaction evidence="1">
        <text>dITP + H2O = dIMP + diphosphate + H(+)</text>
        <dbReference type="Rhea" id="RHEA:28342"/>
        <dbReference type="ChEBI" id="CHEBI:15377"/>
        <dbReference type="ChEBI" id="CHEBI:15378"/>
        <dbReference type="ChEBI" id="CHEBI:33019"/>
        <dbReference type="ChEBI" id="CHEBI:61194"/>
        <dbReference type="ChEBI" id="CHEBI:61382"/>
        <dbReference type="EC" id="3.6.1.66"/>
    </reaction>
</comment>
<comment type="catalytic activity">
    <reaction evidence="1">
        <text>ITP + H2O = IMP + diphosphate + H(+)</text>
        <dbReference type="Rhea" id="RHEA:29399"/>
        <dbReference type="ChEBI" id="CHEBI:15377"/>
        <dbReference type="ChEBI" id="CHEBI:15378"/>
        <dbReference type="ChEBI" id="CHEBI:33019"/>
        <dbReference type="ChEBI" id="CHEBI:58053"/>
        <dbReference type="ChEBI" id="CHEBI:61402"/>
        <dbReference type="EC" id="3.6.1.66"/>
    </reaction>
</comment>
<comment type="cofactor">
    <cofactor evidence="1">
        <name>Mg(2+)</name>
        <dbReference type="ChEBI" id="CHEBI:18420"/>
    </cofactor>
    <text evidence="1">Binds 1 Mg(2+) ion per subunit.</text>
</comment>
<comment type="subunit">
    <text evidence="1">Homodimer.</text>
</comment>
<comment type="similarity">
    <text evidence="1">Belongs to the HAM1 NTPase family.</text>
</comment>
<proteinExistence type="inferred from homology"/>
<dbReference type="EC" id="3.6.1.66" evidence="1"/>
<dbReference type="EMBL" id="BA000016">
    <property type="protein sequence ID" value="BAB81959.1"/>
    <property type="molecule type" value="Genomic_DNA"/>
</dbReference>
<dbReference type="RefSeq" id="WP_011010846.1">
    <property type="nucleotide sequence ID" value="NC_003366.1"/>
</dbReference>
<dbReference type="SMR" id="Q8XI68"/>
<dbReference type="STRING" id="195102.gene:10491561"/>
<dbReference type="KEGG" id="cpe:CPE2253"/>
<dbReference type="HOGENOM" id="CLU_082080_0_2_9"/>
<dbReference type="Proteomes" id="UP000000818">
    <property type="component" value="Chromosome"/>
</dbReference>
<dbReference type="GO" id="GO:0005829">
    <property type="term" value="C:cytosol"/>
    <property type="evidence" value="ECO:0007669"/>
    <property type="project" value="TreeGrafter"/>
</dbReference>
<dbReference type="GO" id="GO:0035870">
    <property type="term" value="F:dITP diphosphatase activity"/>
    <property type="evidence" value="ECO:0007669"/>
    <property type="project" value="RHEA"/>
</dbReference>
<dbReference type="GO" id="GO:0036220">
    <property type="term" value="F:ITP diphosphatase activity"/>
    <property type="evidence" value="ECO:0007669"/>
    <property type="project" value="UniProtKB-EC"/>
</dbReference>
<dbReference type="GO" id="GO:0046872">
    <property type="term" value="F:metal ion binding"/>
    <property type="evidence" value="ECO:0007669"/>
    <property type="project" value="UniProtKB-KW"/>
</dbReference>
<dbReference type="GO" id="GO:0000166">
    <property type="term" value="F:nucleotide binding"/>
    <property type="evidence" value="ECO:0007669"/>
    <property type="project" value="UniProtKB-KW"/>
</dbReference>
<dbReference type="GO" id="GO:0017111">
    <property type="term" value="F:ribonucleoside triphosphate phosphatase activity"/>
    <property type="evidence" value="ECO:0007669"/>
    <property type="project" value="InterPro"/>
</dbReference>
<dbReference type="GO" id="GO:0036222">
    <property type="term" value="F:XTP diphosphatase activity"/>
    <property type="evidence" value="ECO:0007669"/>
    <property type="project" value="RHEA"/>
</dbReference>
<dbReference type="GO" id="GO:0009117">
    <property type="term" value="P:nucleotide metabolic process"/>
    <property type="evidence" value="ECO:0007669"/>
    <property type="project" value="UniProtKB-KW"/>
</dbReference>
<dbReference type="GO" id="GO:0009146">
    <property type="term" value="P:purine nucleoside triphosphate catabolic process"/>
    <property type="evidence" value="ECO:0007669"/>
    <property type="project" value="UniProtKB-UniRule"/>
</dbReference>
<dbReference type="CDD" id="cd00515">
    <property type="entry name" value="HAM1"/>
    <property type="match status" value="1"/>
</dbReference>
<dbReference type="FunFam" id="3.90.950.10:FF:000001">
    <property type="entry name" value="dITP/XTP pyrophosphatase"/>
    <property type="match status" value="1"/>
</dbReference>
<dbReference type="Gene3D" id="3.90.950.10">
    <property type="match status" value="1"/>
</dbReference>
<dbReference type="HAMAP" id="MF_01405">
    <property type="entry name" value="Non_canon_purine_NTPase"/>
    <property type="match status" value="1"/>
</dbReference>
<dbReference type="InterPro" id="IPR020922">
    <property type="entry name" value="dITP/XTP_pyrophosphatase"/>
</dbReference>
<dbReference type="InterPro" id="IPR029001">
    <property type="entry name" value="ITPase-like_fam"/>
</dbReference>
<dbReference type="InterPro" id="IPR002637">
    <property type="entry name" value="RdgB/HAM1"/>
</dbReference>
<dbReference type="NCBIfam" id="NF011397">
    <property type="entry name" value="PRK14822.1"/>
    <property type="match status" value="1"/>
</dbReference>
<dbReference type="NCBIfam" id="TIGR00042">
    <property type="entry name" value="RdgB/HAM1 family non-canonical purine NTP pyrophosphatase"/>
    <property type="match status" value="1"/>
</dbReference>
<dbReference type="PANTHER" id="PTHR11067:SF9">
    <property type="entry name" value="INOSINE TRIPHOSPHATE PYROPHOSPHATASE"/>
    <property type="match status" value="1"/>
</dbReference>
<dbReference type="PANTHER" id="PTHR11067">
    <property type="entry name" value="INOSINE TRIPHOSPHATE PYROPHOSPHATASE/HAM1 PROTEIN"/>
    <property type="match status" value="1"/>
</dbReference>
<dbReference type="Pfam" id="PF01725">
    <property type="entry name" value="Ham1p_like"/>
    <property type="match status" value="1"/>
</dbReference>
<dbReference type="SUPFAM" id="SSF52972">
    <property type="entry name" value="ITPase-like"/>
    <property type="match status" value="1"/>
</dbReference>